<keyword id="KW-0240">DNA-directed RNA polymerase</keyword>
<keyword id="KW-0548">Nucleotidyltransferase</keyword>
<keyword id="KW-1185">Reference proteome</keyword>
<keyword id="KW-0804">Transcription</keyword>
<keyword id="KW-0808">Transferase</keyword>
<sequence length="69" mass="7475">MNQPSLDKLMEKVDSKYTLVVLAAKRARALVEKQAPLVSVAKSAKPVSIALHEIVDGKVSYRQAKGGIK</sequence>
<accession>B0TGS4</accession>
<reference key="1">
    <citation type="journal article" date="2008" name="J. Bacteriol.">
        <title>The genome of Heliobacterium modesticaldum, a phototrophic representative of the Firmicutes containing the simplest photosynthetic apparatus.</title>
        <authorList>
            <person name="Sattley W.M."/>
            <person name="Madigan M.T."/>
            <person name="Swingley W.D."/>
            <person name="Cheung P.C."/>
            <person name="Clocksin K.M."/>
            <person name="Conrad A.L."/>
            <person name="Dejesa L.C."/>
            <person name="Honchak B.M."/>
            <person name="Jung D.O."/>
            <person name="Karbach L.E."/>
            <person name="Kurdoglu A."/>
            <person name="Lahiri S."/>
            <person name="Mastrian S.D."/>
            <person name="Page L.E."/>
            <person name="Taylor H.L."/>
            <person name="Wang Z.T."/>
            <person name="Raymond J."/>
            <person name="Chen M."/>
            <person name="Blankenship R.E."/>
            <person name="Touchman J.W."/>
        </authorList>
    </citation>
    <scope>NUCLEOTIDE SEQUENCE [LARGE SCALE GENOMIC DNA]</scope>
    <source>
        <strain>ATCC 51547 / Ice1</strain>
    </source>
</reference>
<dbReference type="EC" id="2.7.7.6" evidence="1"/>
<dbReference type="EMBL" id="CP000930">
    <property type="protein sequence ID" value="ABZ84685.1"/>
    <property type="molecule type" value="Genomic_DNA"/>
</dbReference>
<dbReference type="RefSeq" id="WP_012283185.1">
    <property type="nucleotide sequence ID" value="NC_010337.2"/>
</dbReference>
<dbReference type="SMR" id="B0TGS4"/>
<dbReference type="STRING" id="498761.HM1_2128"/>
<dbReference type="KEGG" id="hmo:HM1_2128"/>
<dbReference type="eggNOG" id="COG1758">
    <property type="taxonomic scope" value="Bacteria"/>
</dbReference>
<dbReference type="HOGENOM" id="CLU_125406_6_1_9"/>
<dbReference type="OrthoDB" id="9815459at2"/>
<dbReference type="Proteomes" id="UP000008550">
    <property type="component" value="Chromosome"/>
</dbReference>
<dbReference type="GO" id="GO:0000428">
    <property type="term" value="C:DNA-directed RNA polymerase complex"/>
    <property type="evidence" value="ECO:0007669"/>
    <property type="project" value="UniProtKB-KW"/>
</dbReference>
<dbReference type="GO" id="GO:0003677">
    <property type="term" value="F:DNA binding"/>
    <property type="evidence" value="ECO:0007669"/>
    <property type="project" value="UniProtKB-UniRule"/>
</dbReference>
<dbReference type="GO" id="GO:0003899">
    <property type="term" value="F:DNA-directed RNA polymerase activity"/>
    <property type="evidence" value="ECO:0007669"/>
    <property type="project" value="UniProtKB-UniRule"/>
</dbReference>
<dbReference type="GO" id="GO:0006351">
    <property type="term" value="P:DNA-templated transcription"/>
    <property type="evidence" value="ECO:0007669"/>
    <property type="project" value="UniProtKB-UniRule"/>
</dbReference>
<dbReference type="Gene3D" id="3.90.940.10">
    <property type="match status" value="1"/>
</dbReference>
<dbReference type="HAMAP" id="MF_00366">
    <property type="entry name" value="RNApol_bact_RpoZ"/>
    <property type="match status" value="1"/>
</dbReference>
<dbReference type="InterPro" id="IPR003716">
    <property type="entry name" value="DNA-dir_RNA_pol_omega"/>
</dbReference>
<dbReference type="InterPro" id="IPR006110">
    <property type="entry name" value="Pol_omega/Rpo6/RPB6"/>
</dbReference>
<dbReference type="InterPro" id="IPR036161">
    <property type="entry name" value="RPB6/omega-like_sf"/>
</dbReference>
<dbReference type="NCBIfam" id="TIGR00690">
    <property type="entry name" value="rpoZ"/>
    <property type="match status" value="1"/>
</dbReference>
<dbReference type="PANTHER" id="PTHR34476">
    <property type="entry name" value="DNA-DIRECTED RNA POLYMERASE SUBUNIT OMEGA"/>
    <property type="match status" value="1"/>
</dbReference>
<dbReference type="PANTHER" id="PTHR34476:SF1">
    <property type="entry name" value="DNA-DIRECTED RNA POLYMERASE SUBUNIT OMEGA"/>
    <property type="match status" value="1"/>
</dbReference>
<dbReference type="Pfam" id="PF01192">
    <property type="entry name" value="RNA_pol_Rpb6"/>
    <property type="match status" value="1"/>
</dbReference>
<dbReference type="SMART" id="SM01409">
    <property type="entry name" value="RNA_pol_Rpb6"/>
    <property type="match status" value="1"/>
</dbReference>
<dbReference type="SUPFAM" id="SSF63562">
    <property type="entry name" value="RPB6/omega subunit-like"/>
    <property type="match status" value="1"/>
</dbReference>
<feature type="chain" id="PRO_1000121231" description="DNA-directed RNA polymerase subunit omega">
    <location>
        <begin position="1"/>
        <end position="69"/>
    </location>
</feature>
<gene>
    <name evidence="1" type="primary">rpoZ</name>
    <name type="ordered locus">Helmi_20600</name>
    <name type="ORF">HM1_2128</name>
</gene>
<proteinExistence type="inferred from homology"/>
<organism>
    <name type="scientific">Heliobacterium modesticaldum (strain ATCC 51547 / Ice1)</name>
    <dbReference type="NCBI Taxonomy" id="498761"/>
    <lineage>
        <taxon>Bacteria</taxon>
        <taxon>Bacillati</taxon>
        <taxon>Bacillota</taxon>
        <taxon>Clostridia</taxon>
        <taxon>Eubacteriales</taxon>
        <taxon>Heliobacteriaceae</taxon>
        <taxon>Heliomicrobium</taxon>
    </lineage>
</organism>
<protein>
    <recommendedName>
        <fullName evidence="1">DNA-directed RNA polymerase subunit omega</fullName>
        <shortName evidence="1">RNAP omega subunit</shortName>
        <ecNumber evidence="1">2.7.7.6</ecNumber>
    </recommendedName>
    <alternativeName>
        <fullName evidence="1">RNA polymerase omega subunit</fullName>
    </alternativeName>
    <alternativeName>
        <fullName evidence="1">Transcriptase subunit omega</fullName>
    </alternativeName>
</protein>
<evidence type="ECO:0000255" key="1">
    <source>
        <dbReference type="HAMAP-Rule" id="MF_00366"/>
    </source>
</evidence>
<name>RPOZ_HELMI</name>
<comment type="function">
    <text evidence="1">Promotes RNA polymerase assembly. Latches the N- and C-terminal regions of the beta' subunit thereby facilitating its interaction with the beta and alpha subunits.</text>
</comment>
<comment type="catalytic activity">
    <reaction evidence="1">
        <text>RNA(n) + a ribonucleoside 5'-triphosphate = RNA(n+1) + diphosphate</text>
        <dbReference type="Rhea" id="RHEA:21248"/>
        <dbReference type="Rhea" id="RHEA-COMP:14527"/>
        <dbReference type="Rhea" id="RHEA-COMP:17342"/>
        <dbReference type="ChEBI" id="CHEBI:33019"/>
        <dbReference type="ChEBI" id="CHEBI:61557"/>
        <dbReference type="ChEBI" id="CHEBI:140395"/>
        <dbReference type="EC" id="2.7.7.6"/>
    </reaction>
</comment>
<comment type="subunit">
    <text evidence="1">The RNAP catalytic core consists of 2 alpha, 1 beta, 1 beta' and 1 omega subunit. When a sigma factor is associated with the core the holoenzyme is formed, which can initiate transcription.</text>
</comment>
<comment type="similarity">
    <text evidence="1">Belongs to the RNA polymerase subunit omega family.</text>
</comment>